<name>EXTL2_MOUSE</name>
<comment type="function">
    <text evidence="2">Glycosyltransferase required for the biosynthesis of heparan-sulfate and responsible for the alternating addition of beta-1-4-linked glucuronic acid (GlcA) and alpha-1-4-linked N-acetylglucosamine (GlcNAc) units to nascent heparan sulfate chains.</text>
</comment>
<comment type="catalytic activity">
    <reaction evidence="4">
        <text>3-O-(beta-D-GlcA-(1-&gt;3)-beta-D-Gal-(1-&gt;3)-beta-D-Gal-(1-&gt;4)-beta-D-Xyl)-L-seryl-[protein] + UDP-N-acetyl-alpha-D-glucosamine = 3-O-(alpha-D-GlcNAc-(1-&gt;4)-beta-D-GlcA-(1-&gt;3)-beta-D-Gal-(1-&gt;3)-beta-D-Gal-(1-&gt;4)-beta-D-Xyl)-L-seryl-[protein] + UDP + H(+)</text>
        <dbReference type="Rhea" id="RHEA:16221"/>
        <dbReference type="Rhea" id="RHEA-COMP:12573"/>
        <dbReference type="Rhea" id="RHEA-COMP:12574"/>
        <dbReference type="ChEBI" id="CHEBI:15378"/>
        <dbReference type="ChEBI" id="CHEBI:57705"/>
        <dbReference type="ChEBI" id="CHEBI:58223"/>
        <dbReference type="ChEBI" id="CHEBI:132093"/>
        <dbReference type="ChEBI" id="CHEBI:132104"/>
        <dbReference type="EC" id="2.4.1.223"/>
    </reaction>
</comment>
<comment type="cofactor">
    <cofactor evidence="4">
        <name>Mn(2+)</name>
        <dbReference type="ChEBI" id="CHEBI:29035"/>
    </cofactor>
</comment>
<comment type="biophysicochemical properties">
    <kinetics>
        <KM evidence="4">320 uM for UDP-GalNAc</KM>
        <KM evidence="4">560 uM for UDP-GlcNAc</KM>
    </kinetics>
</comment>
<comment type="subcellular location">
    <subcellularLocation>
        <location evidence="1">Endoplasmic reticulum membrane</location>
        <topology evidence="1">Single-pass type II membrane protein</topology>
    </subcellularLocation>
</comment>
<comment type="similarity">
    <text evidence="5">Belongs to the glycosyltransferase 47 family.</text>
</comment>
<accession>Q9ES89</accession>
<accession>Q505Q8</accession>
<accession>Q9CX90</accession>
<gene>
    <name type="primary">Extl2</name>
    <name type="synonym">Extr2</name>
</gene>
<evidence type="ECO:0000250" key="1"/>
<evidence type="ECO:0000250" key="2">
    <source>
        <dbReference type="UniProtKB" id="Q9UBQ6"/>
    </source>
</evidence>
<evidence type="ECO:0000255" key="3"/>
<evidence type="ECO:0000269" key="4">
    <source>
    </source>
</evidence>
<evidence type="ECO:0000305" key="5"/>
<evidence type="ECO:0000312" key="6">
    <source>
        <dbReference type="PDB" id="1OMZ"/>
    </source>
</evidence>
<evidence type="ECO:0007744" key="7">
    <source>
        <dbReference type="PDB" id="1OMX"/>
    </source>
</evidence>
<evidence type="ECO:0007744" key="8">
    <source>
        <dbReference type="PDB" id="1OMZ"/>
    </source>
</evidence>
<evidence type="ECO:0007744" key="9">
    <source>
        <dbReference type="PDB" id="1ON6"/>
    </source>
</evidence>
<evidence type="ECO:0007744" key="10">
    <source>
        <dbReference type="PDB" id="1ON8"/>
    </source>
</evidence>
<evidence type="ECO:0007829" key="11">
    <source>
        <dbReference type="PDB" id="1OMZ"/>
    </source>
</evidence>
<evidence type="ECO:0007829" key="12">
    <source>
        <dbReference type="PDB" id="1ON8"/>
    </source>
</evidence>
<reference key="1">
    <citation type="journal article" date="2000" name="Cytogenet. Cell Genet.">
        <title>Characterization and genomic localization of the mouse Extl2 gene.</title>
        <authorList>
            <person name="Wuyts W."/>
            <person name="Van Hul W."/>
        </authorList>
    </citation>
    <scope>NUCLEOTIDE SEQUENCE [MRNA]</scope>
</reference>
<reference key="2">
    <citation type="journal article" date="2005" name="Science">
        <title>The transcriptional landscape of the mammalian genome.</title>
        <authorList>
            <person name="Carninci P."/>
            <person name="Kasukawa T."/>
            <person name="Katayama S."/>
            <person name="Gough J."/>
            <person name="Frith M.C."/>
            <person name="Maeda N."/>
            <person name="Oyama R."/>
            <person name="Ravasi T."/>
            <person name="Lenhard B."/>
            <person name="Wells C."/>
            <person name="Kodzius R."/>
            <person name="Shimokawa K."/>
            <person name="Bajic V.B."/>
            <person name="Brenner S.E."/>
            <person name="Batalov S."/>
            <person name="Forrest A.R."/>
            <person name="Zavolan M."/>
            <person name="Davis M.J."/>
            <person name="Wilming L.G."/>
            <person name="Aidinis V."/>
            <person name="Allen J.E."/>
            <person name="Ambesi-Impiombato A."/>
            <person name="Apweiler R."/>
            <person name="Aturaliya R.N."/>
            <person name="Bailey T.L."/>
            <person name="Bansal M."/>
            <person name="Baxter L."/>
            <person name="Beisel K.W."/>
            <person name="Bersano T."/>
            <person name="Bono H."/>
            <person name="Chalk A.M."/>
            <person name="Chiu K.P."/>
            <person name="Choudhary V."/>
            <person name="Christoffels A."/>
            <person name="Clutterbuck D.R."/>
            <person name="Crowe M.L."/>
            <person name="Dalla E."/>
            <person name="Dalrymple B.P."/>
            <person name="de Bono B."/>
            <person name="Della Gatta G."/>
            <person name="di Bernardo D."/>
            <person name="Down T."/>
            <person name="Engstrom P."/>
            <person name="Fagiolini M."/>
            <person name="Faulkner G."/>
            <person name="Fletcher C.F."/>
            <person name="Fukushima T."/>
            <person name="Furuno M."/>
            <person name="Futaki S."/>
            <person name="Gariboldi M."/>
            <person name="Georgii-Hemming P."/>
            <person name="Gingeras T.R."/>
            <person name="Gojobori T."/>
            <person name="Green R.E."/>
            <person name="Gustincich S."/>
            <person name="Harbers M."/>
            <person name="Hayashi Y."/>
            <person name="Hensch T.K."/>
            <person name="Hirokawa N."/>
            <person name="Hill D."/>
            <person name="Huminiecki L."/>
            <person name="Iacono M."/>
            <person name="Ikeo K."/>
            <person name="Iwama A."/>
            <person name="Ishikawa T."/>
            <person name="Jakt M."/>
            <person name="Kanapin A."/>
            <person name="Katoh M."/>
            <person name="Kawasawa Y."/>
            <person name="Kelso J."/>
            <person name="Kitamura H."/>
            <person name="Kitano H."/>
            <person name="Kollias G."/>
            <person name="Krishnan S.P."/>
            <person name="Kruger A."/>
            <person name="Kummerfeld S.K."/>
            <person name="Kurochkin I.V."/>
            <person name="Lareau L.F."/>
            <person name="Lazarevic D."/>
            <person name="Lipovich L."/>
            <person name="Liu J."/>
            <person name="Liuni S."/>
            <person name="McWilliam S."/>
            <person name="Madan Babu M."/>
            <person name="Madera M."/>
            <person name="Marchionni L."/>
            <person name="Matsuda H."/>
            <person name="Matsuzawa S."/>
            <person name="Miki H."/>
            <person name="Mignone F."/>
            <person name="Miyake S."/>
            <person name="Morris K."/>
            <person name="Mottagui-Tabar S."/>
            <person name="Mulder N."/>
            <person name="Nakano N."/>
            <person name="Nakauchi H."/>
            <person name="Ng P."/>
            <person name="Nilsson R."/>
            <person name="Nishiguchi S."/>
            <person name="Nishikawa S."/>
            <person name="Nori F."/>
            <person name="Ohara O."/>
            <person name="Okazaki Y."/>
            <person name="Orlando V."/>
            <person name="Pang K.C."/>
            <person name="Pavan W.J."/>
            <person name="Pavesi G."/>
            <person name="Pesole G."/>
            <person name="Petrovsky N."/>
            <person name="Piazza S."/>
            <person name="Reed J."/>
            <person name="Reid J.F."/>
            <person name="Ring B.Z."/>
            <person name="Ringwald M."/>
            <person name="Rost B."/>
            <person name="Ruan Y."/>
            <person name="Salzberg S.L."/>
            <person name="Sandelin A."/>
            <person name="Schneider C."/>
            <person name="Schoenbach C."/>
            <person name="Sekiguchi K."/>
            <person name="Semple C.A."/>
            <person name="Seno S."/>
            <person name="Sessa L."/>
            <person name="Sheng Y."/>
            <person name="Shibata Y."/>
            <person name="Shimada H."/>
            <person name="Shimada K."/>
            <person name="Silva D."/>
            <person name="Sinclair B."/>
            <person name="Sperling S."/>
            <person name="Stupka E."/>
            <person name="Sugiura K."/>
            <person name="Sultana R."/>
            <person name="Takenaka Y."/>
            <person name="Taki K."/>
            <person name="Tammoja K."/>
            <person name="Tan S.L."/>
            <person name="Tang S."/>
            <person name="Taylor M.S."/>
            <person name="Tegner J."/>
            <person name="Teichmann S.A."/>
            <person name="Ueda H.R."/>
            <person name="van Nimwegen E."/>
            <person name="Verardo R."/>
            <person name="Wei C.L."/>
            <person name="Yagi K."/>
            <person name="Yamanishi H."/>
            <person name="Zabarovsky E."/>
            <person name="Zhu S."/>
            <person name="Zimmer A."/>
            <person name="Hide W."/>
            <person name="Bult C."/>
            <person name="Grimmond S.M."/>
            <person name="Teasdale R.D."/>
            <person name="Liu E.T."/>
            <person name="Brusic V."/>
            <person name="Quackenbush J."/>
            <person name="Wahlestedt C."/>
            <person name="Mattick J.S."/>
            <person name="Hume D.A."/>
            <person name="Kai C."/>
            <person name="Sasaki D."/>
            <person name="Tomaru Y."/>
            <person name="Fukuda S."/>
            <person name="Kanamori-Katayama M."/>
            <person name="Suzuki M."/>
            <person name="Aoki J."/>
            <person name="Arakawa T."/>
            <person name="Iida J."/>
            <person name="Imamura K."/>
            <person name="Itoh M."/>
            <person name="Kato T."/>
            <person name="Kawaji H."/>
            <person name="Kawagashira N."/>
            <person name="Kawashima T."/>
            <person name="Kojima M."/>
            <person name="Kondo S."/>
            <person name="Konno H."/>
            <person name="Nakano K."/>
            <person name="Ninomiya N."/>
            <person name="Nishio T."/>
            <person name="Okada M."/>
            <person name="Plessy C."/>
            <person name="Shibata K."/>
            <person name="Shiraki T."/>
            <person name="Suzuki S."/>
            <person name="Tagami M."/>
            <person name="Waki K."/>
            <person name="Watahiki A."/>
            <person name="Okamura-Oho Y."/>
            <person name="Suzuki H."/>
            <person name="Kawai J."/>
            <person name="Hayashizaki Y."/>
        </authorList>
    </citation>
    <scope>NUCLEOTIDE SEQUENCE [LARGE SCALE MRNA]</scope>
    <source>
        <strain>C57BL/6J</strain>
        <tissue>Embryonic head</tissue>
    </source>
</reference>
<reference key="3">
    <citation type="journal article" date="2004" name="Genome Res.">
        <title>The status, quality, and expansion of the NIH full-length cDNA project: the Mammalian Gene Collection (MGC).</title>
        <authorList>
            <consortium name="The MGC Project Team"/>
        </authorList>
    </citation>
    <scope>NUCLEOTIDE SEQUENCE [LARGE SCALE MRNA]</scope>
    <source>
        <strain>C57BL/6J</strain>
        <tissue>Eye</tissue>
        <tissue>Mammary gland</tissue>
    </source>
</reference>
<reference key="4">
    <citation type="journal article" date="2003" name="J. Biol. Chem.">
        <title>Crystal structure of an alpha 1,4-N-acetylhexosaminyltransferase (EXTL2), a member of the exostosin gene family involved in heparan sulfate biosynthesis.</title>
        <authorList>
            <person name="Pedersen L.C."/>
            <person name="Dong J."/>
            <person name="Taniguchi F."/>
            <person name="Kitagawa H."/>
            <person name="Krahn J.M."/>
            <person name="Pedersen L.G."/>
            <person name="Sugahara K."/>
            <person name="Negishi M."/>
        </authorList>
    </citation>
    <scope>X-RAY CRYSTALLOGRAPHY (2.1 ANGSTROMS) OF 38-330 IN COMPLEX WITH UDP-GLCNAC; UDP-GALNAC AND MANGANESE</scope>
    <scope>DISULFIDE BOND</scope>
    <scope>MUTAGENESIS OF ASN-243; ASP-246 AND ARG-293</scope>
    <scope>CATALYTIC ACTIVITY</scope>
    <scope>ACTIVE SITE</scope>
    <scope>BIOPHYSICOCHEMICAL PROPERTIES</scope>
    <scope>COFACTOR</scope>
</reference>
<feature type="chain" id="PRO_0000149656" description="Exostosin-like 2">
    <location>
        <begin position="1"/>
        <end position="330"/>
    </location>
</feature>
<feature type="topological domain" description="Cytoplasmic" evidence="3">
    <location>
        <begin position="1"/>
        <end position="21"/>
    </location>
</feature>
<feature type="transmembrane region" description="Helical; Signal-anchor for type II membrane protein" evidence="3">
    <location>
        <begin position="22"/>
        <end position="42"/>
    </location>
</feature>
<feature type="topological domain" description="Lumenal" evidence="3">
    <location>
        <begin position="43"/>
        <end position="330"/>
    </location>
</feature>
<feature type="active site" evidence="4">
    <location>
        <position position="246"/>
    </location>
</feature>
<feature type="binding site" evidence="4 8 10">
    <location>
        <position position="72"/>
    </location>
    <ligand>
        <name>UDP-N-acetyl-alpha-D-galactosamine</name>
        <dbReference type="ChEBI" id="CHEBI:67138"/>
    </ligand>
</feature>
<feature type="binding site" evidence="4 9 10">
    <location>
        <position position="72"/>
    </location>
    <ligand>
        <name>UDP-N-acetyl-alpha-D-glucosamine</name>
        <dbReference type="ChEBI" id="CHEBI:57705"/>
    </ligand>
</feature>
<feature type="binding site" evidence="4 8 10">
    <location>
        <position position="76"/>
    </location>
    <ligand>
        <name>UDP-N-acetyl-alpha-D-galactosamine</name>
        <dbReference type="ChEBI" id="CHEBI:67138"/>
    </ligand>
</feature>
<feature type="binding site" evidence="4 9 10">
    <location>
        <position position="76"/>
    </location>
    <ligand>
        <name>UDP-N-acetyl-alpha-D-glucosamine</name>
        <dbReference type="ChEBI" id="CHEBI:57705"/>
    </ligand>
</feature>
<feature type="binding site" evidence="4 8 10">
    <location>
        <position position="101"/>
    </location>
    <ligand>
        <name>UDP-N-acetyl-alpha-D-galactosamine</name>
        <dbReference type="ChEBI" id="CHEBI:67138"/>
    </ligand>
</feature>
<feature type="binding site" evidence="4 9 10">
    <location>
        <position position="101"/>
    </location>
    <ligand>
        <name>UDP-N-acetyl-alpha-D-glucosamine</name>
        <dbReference type="ChEBI" id="CHEBI:57705"/>
    </ligand>
</feature>
<feature type="binding site" evidence="4 8 10">
    <location>
        <position position="130"/>
    </location>
    <ligand>
        <name>UDP-N-acetyl-alpha-D-galactosamine</name>
        <dbReference type="ChEBI" id="CHEBI:67138"/>
    </ligand>
</feature>
<feature type="binding site" evidence="4 9 10">
    <location>
        <position position="130"/>
    </location>
    <ligand>
        <name>UDP-N-acetyl-alpha-D-glucosamine</name>
        <dbReference type="ChEBI" id="CHEBI:57705"/>
    </ligand>
</feature>
<feature type="binding site" evidence="4 8">
    <location>
        <position position="135"/>
    </location>
    <ligand>
        <name>UDP-N-acetyl-alpha-D-galactosamine</name>
        <dbReference type="ChEBI" id="CHEBI:67138"/>
    </ligand>
</feature>
<feature type="binding site" evidence="4 9">
    <location>
        <position position="135"/>
    </location>
    <ligand>
        <name>UDP-N-acetyl-alpha-D-glucosamine</name>
        <dbReference type="ChEBI" id="CHEBI:57705"/>
    </ligand>
</feature>
<feature type="binding site" evidence="4 8">
    <location>
        <position position="151"/>
    </location>
    <ligand>
        <name>UDP-N-acetyl-alpha-D-galactosamine</name>
        <dbReference type="ChEBI" id="CHEBI:67138"/>
    </ligand>
</feature>
<feature type="binding site" evidence="4 9">
    <location>
        <position position="151"/>
    </location>
    <ligand>
        <name>UDP-N-acetyl-alpha-D-glucosamine</name>
        <dbReference type="ChEBI" id="CHEBI:57705"/>
    </ligand>
</feature>
<feature type="binding site" evidence="4 8 10">
    <location>
        <position position="152"/>
    </location>
    <ligand>
        <name>UDP-N-acetyl-alpha-D-galactosamine</name>
        <dbReference type="ChEBI" id="CHEBI:67138"/>
    </ligand>
</feature>
<feature type="binding site" evidence="4 9 10">
    <location>
        <position position="152"/>
    </location>
    <ligand>
        <name>UDP-N-acetyl-alpha-D-glucosamine</name>
        <dbReference type="ChEBI" id="CHEBI:57705"/>
    </ligand>
</feature>
<feature type="binding site" evidence="4 6 9 10">
    <location>
        <position position="153"/>
    </location>
    <ligand>
        <name>Mn(2+)</name>
        <dbReference type="ChEBI" id="CHEBI:29035"/>
        <note>catalytic</note>
    </ligand>
</feature>
<feature type="binding site" evidence="4 8">
    <location>
        <position position="153"/>
    </location>
    <ligand>
        <name>UDP-N-acetyl-alpha-D-galactosamine</name>
        <dbReference type="ChEBI" id="CHEBI:67138"/>
    </ligand>
</feature>
<feature type="binding site" evidence="4 9">
    <location>
        <position position="153"/>
    </location>
    <ligand>
        <name>UDP-N-acetyl-alpha-D-glucosamine</name>
        <dbReference type="ChEBI" id="CHEBI:57705"/>
    </ligand>
</feature>
<feature type="binding site" evidence="4 8">
    <location>
        <position position="245"/>
    </location>
    <ligand>
        <name>UDP-N-acetyl-alpha-D-galactosamine</name>
        <dbReference type="ChEBI" id="CHEBI:67138"/>
    </ligand>
</feature>
<feature type="binding site" evidence="4 9">
    <location>
        <position position="245"/>
    </location>
    <ligand>
        <name>UDP-N-acetyl-alpha-D-glucosamine</name>
        <dbReference type="ChEBI" id="CHEBI:57705"/>
    </ligand>
</feature>
<feature type="binding site" evidence="4 9">
    <location>
        <position position="246"/>
    </location>
    <ligand>
        <name>UDP-N-acetyl-alpha-D-glucosamine</name>
        <dbReference type="ChEBI" id="CHEBI:57705"/>
    </ligand>
</feature>
<feature type="binding site" evidence="4 8">
    <location>
        <position position="293"/>
    </location>
    <ligand>
        <name>UDP-N-acetyl-alpha-D-galactosamine</name>
        <dbReference type="ChEBI" id="CHEBI:67138"/>
    </ligand>
</feature>
<feature type="binding site" evidence="4 9">
    <location>
        <position position="293"/>
    </location>
    <ligand>
        <name>UDP-N-acetyl-alpha-D-glucosamine</name>
        <dbReference type="ChEBI" id="CHEBI:57705"/>
    </ligand>
</feature>
<feature type="glycosylation site" description="N-linked (GlcNAc...) asparagine" evidence="3">
    <location>
        <position position="75"/>
    </location>
</feature>
<feature type="disulfide bond" evidence="4 7 8 9 10">
    <location>
        <begin position="244"/>
        <end position="296"/>
    </location>
</feature>
<feature type="mutagenesis site" description="Reduced activity." evidence="4">
    <original>N</original>
    <variation>A</variation>
    <location>
        <position position="243"/>
    </location>
</feature>
<feature type="mutagenesis site" description="Abolishes enzyme activity." evidence="4">
    <original>D</original>
    <variation>A</variation>
    <location>
        <position position="246"/>
    </location>
</feature>
<feature type="mutagenesis site" description="Reduced activity." evidence="4">
    <original>R</original>
    <variation>A</variation>
    <location>
        <position position="293"/>
    </location>
</feature>
<feature type="sequence conflict" description="In Ref. 2; BAB31683." evidence="5" ref="2">
    <original>Y</original>
    <variation>D</variation>
    <location>
        <position position="191"/>
    </location>
</feature>
<feature type="strand" evidence="11">
    <location>
        <begin position="67"/>
        <end position="75"/>
    </location>
</feature>
<feature type="helix" evidence="11">
    <location>
        <begin position="77"/>
        <end position="87"/>
    </location>
</feature>
<feature type="strand" evidence="11">
    <location>
        <begin position="93"/>
        <end position="100"/>
    </location>
</feature>
<feature type="helix" evidence="11">
    <location>
        <begin position="109"/>
        <end position="114"/>
    </location>
</feature>
<feature type="strand" evidence="11">
    <location>
        <begin position="122"/>
        <end position="126"/>
    </location>
</feature>
<feature type="helix" evidence="11">
    <location>
        <begin position="132"/>
        <end position="136"/>
    </location>
</feature>
<feature type="strand" evidence="11">
    <location>
        <begin position="144"/>
        <end position="150"/>
    </location>
</feature>
<feature type="strand" evidence="11">
    <location>
        <begin position="154"/>
        <end position="156"/>
    </location>
</feature>
<feature type="helix" evidence="11">
    <location>
        <begin position="158"/>
        <end position="168"/>
    </location>
</feature>
<feature type="strand" evidence="11">
    <location>
        <begin position="174"/>
        <end position="178"/>
    </location>
</feature>
<feature type="strand" evidence="11">
    <location>
        <begin position="180"/>
        <end position="187"/>
    </location>
</feature>
<feature type="strand" evidence="11">
    <location>
        <begin position="190"/>
        <end position="194"/>
    </location>
</feature>
<feature type="strand" evidence="11">
    <location>
        <begin position="202"/>
        <end position="206"/>
    </location>
</feature>
<feature type="strand" evidence="11">
    <location>
        <begin position="209"/>
        <end position="212"/>
    </location>
</feature>
<feature type="strand" evidence="11">
    <location>
        <begin position="216"/>
        <end position="220"/>
    </location>
</feature>
<feature type="helix" evidence="11">
    <location>
        <begin position="222"/>
        <end position="228"/>
    </location>
</feature>
<feature type="helix" evidence="11">
    <location>
        <begin position="232"/>
        <end position="241"/>
    </location>
</feature>
<feature type="helix" evidence="11">
    <location>
        <begin position="245"/>
        <end position="257"/>
    </location>
</feature>
<feature type="strand" evidence="11">
    <location>
        <begin position="261"/>
        <end position="265"/>
    </location>
</feature>
<feature type="strand" evidence="11">
    <location>
        <begin position="268"/>
        <end position="272"/>
    </location>
</feature>
<feature type="strand" evidence="12">
    <location>
        <begin position="276"/>
        <end position="279"/>
    </location>
</feature>
<feature type="helix" evidence="12">
    <location>
        <begin position="283"/>
        <end position="285"/>
    </location>
</feature>
<feature type="helix" evidence="11">
    <location>
        <begin position="288"/>
        <end position="304"/>
    </location>
</feature>
<feature type="strand" evidence="11">
    <location>
        <begin position="314"/>
        <end position="318"/>
    </location>
</feature>
<feature type="turn" evidence="11">
    <location>
        <begin position="323"/>
        <end position="326"/>
    </location>
</feature>
<sequence length="330" mass="37391">MMRGCHICKLPGRVMGIRVLRFSLVVILVLLLVAGALTNLLPNIKEDKMLTLRREIKSPSKSALDSFTLIMQTYNRTDLLLRLLNHYQAVPSLHKVIVVWNNVGEKGPEELWNSLGPHPIPVIFKPQTANKMRNRLQVFPEVETNAVLMVDDDTLISAQDLVFAFSIWQQFPDQIIGFVPRKHVSTSSGIYSYGGFELQTPGPGNGDQYSMVLIGASFFNSKYLELFQKQPAAVHALIDETQNCDDIAMNFLVTRHTGKPSGIFVKPINMVNLEKETNGYSGMWHRAEHFLQRSYCINKLVNIYDGMPLKYSNIMISQFGFPYANHKSKM</sequence>
<organism>
    <name type="scientific">Mus musculus</name>
    <name type="common">Mouse</name>
    <dbReference type="NCBI Taxonomy" id="10090"/>
    <lineage>
        <taxon>Eukaryota</taxon>
        <taxon>Metazoa</taxon>
        <taxon>Chordata</taxon>
        <taxon>Craniata</taxon>
        <taxon>Vertebrata</taxon>
        <taxon>Euteleostomi</taxon>
        <taxon>Mammalia</taxon>
        <taxon>Eutheria</taxon>
        <taxon>Euarchontoglires</taxon>
        <taxon>Glires</taxon>
        <taxon>Rodentia</taxon>
        <taxon>Myomorpha</taxon>
        <taxon>Muroidea</taxon>
        <taxon>Muridae</taxon>
        <taxon>Murinae</taxon>
        <taxon>Mus</taxon>
        <taxon>Mus</taxon>
    </lineage>
</organism>
<proteinExistence type="evidence at protein level"/>
<protein>
    <recommendedName>
        <fullName>Exostosin-like 2</fullName>
        <ecNumber evidence="4">2.4.1.223</ecNumber>
    </recommendedName>
    <alternativeName>
        <fullName>Alpha-1,4-N-acetylhexosaminyltransferase EXTL2</fullName>
    </alternativeName>
    <alternativeName>
        <fullName>Alpha-GalNAcT EXTL2</fullName>
    </alternativeName>
    <alternativeName>
        <fullName>EXT-related protein 2</fullName>
    </alternativeName>
    <alternativeName>
        <fullName>Glucuronyl-galactosyl-proteoglycan 4-alpha-N-acetylglucosaminyltransferase</fullName>
    </alternativeName>
</protein>
<keyword id="KW-0002">3D-structure</keyword>
<keyword id="KW-1015">Disulfide bond</keyword>
<keyword id="KW-0256">Endoplasmic reticulum</keyword>
<keyword id="KW-0325">Glycoprotein</keyword>
<keyword id="KW-0328">Glycosyltransferase</keyword>
<keyword id="KW-0464">Manganese</keyword>
<keyword id="KW-0472">Membrane</keyword>
<keyword id="KW-0479">Metal-binding</keyword>
<keyword id="KW-1185">Reference proteome</keyword>
<keyword id="KW-0735">Signal-anchor</keyword>
<keyword id="KW-0808">Transferase</keyword>
<keyword id="KW-0812">Transmembrane</keyword>
<keyword id="KW-1133">Transmembrane helix</keyword>
<dbReference type="EC" id="2.4.1.223" evidence="4"/>
<dbReference type="EMBL" id="AF200973">
    <property type="protein sequence ID" value="AAG17542.1"/>
    <property type="molecule type" value="mRNA"/>
</dbReference>
<dbReference type="EMBL" id="AK019370">
    <property type="protein sequence ID" value="BAB31683.2"/>
    <property type="molecule type" value="mRNA"/>
</dbReference>
<dbReference type="EMBL" id="BC031438">
    <property type="protein sequence ID" value="AAH31438.1"/>
    <property type="molecule type" value="mRNA"/>
</dbReference>
<dbReference type="EMBL" id="BC094444">
    <property type="protein sequence ID" value="AAH94444.1"/>
    <property type="molecule type" value="mRNA"/>
</dbReference>
<dbReference type="CCDS" id="CCDS17784.1"/>
<dbReference type="RefSeq" id="NP_001156986.1">
    <property type="nucleotide sequence ID" value="NM_001163514.1"/>
</dbReference>
<dbReference type="RefSeq" id="NP_067363.3">
    <property type="nucleotide sequence ID" value="NM_021388.4"/>
</dbReference>
<dbReference type="PDB" id="1OMX">
    <property type="method" value="X-ray"/>
    <property type="resolution" value="2.40 A"/>
    <property type="chains" value="A/B=38-330"/>
</dbReference>
<dbReference type="PDB" id="1OMZ">
    <property type="method" value="X-ray"/>
    <property type="resolution" value="2.10 A"/>
    <property type="chains" value="A/B=38-330"/>
</dbReference>
<dbReference type="PDB" id="1ON6">
    <property type="method" value="X-ray"/>
    <property type="resolution" value="2.30 A"/>
    <property type="chains" value="A/B=38-330"/>
</dbReference>
<dbReference type="PDB" id="1ON8">
    <property type="method" value="X-ray"/>
    <property type="resolution" value="2.70 A"/>
    <property type="chains" value="A/B=38-330"/>
</dbReference>
<dbReference type="PDBsum" id="1OMX"/>
<dbReference type="PDBsum" id="1OMZ"/>
<dbReference type="PDBsum" id="1ON6"/>
<dbReference type="PDBsum" id="1ON8"/>
<dbReference type="SMR" id="Q9ES89"/>
<dbReference type="FunCoup" id="Q9ES89">
    <property type="interactions" value="1949"/>
</dbReference>
<dbReference type="STRING" id="10090.ENSMUSP00000029575"/>
<dbReference type="CAZy" id="GT64">
    <property type="family name" value="Glycosyltransferase Family 64"/>
</dbReference>
<dbReference type="GlyCosmos" id="Q9ES89">
    <property type="glycosylation" value="1 site, No reported glycans"/>
</dbReference>
<dbReference type="GlyGen" id="Q9ES89">
    <property type="glycosylation" value="1 site, 1 N-linked glycan (1 site)"/>
</dbReference>
<dbReference type="PhosphoSitePlus" id="Q9ES89"/>
<dbReference type="SwissPalm" id="Q9ES89"/>
<dbReference type="PaxDb" id="10090-ENSMUSP00000029575"/>
<dbReference type="ProteomicsDB" id="275560"/>
<dbReference type="Pumba" id="Q9ES89"/>
<dbReference type="Antibodypedia" id="33697">
    <property type="antibodies" value="148 antibodies from 25 providers"/>
</dbReference>
<dbReference type="DNASU" id="58193"/>
<dbReference type="Ensembl" id="ENSMUST00000029575.12">
    <property type="protein sequence ID" value="ENSMUSP00000029575.6"/>
    <property type="gene ID" value="ENSMUSG00000027963.15"/>
</dbReference>
<dbReference type="Ensembl" id="ENSMUST00000106502.2">
    <property type="protein sequence ID" value="ENSMUSP00000102111.2"/>
    <property type="gene ID" value="ENSMUSG00000027963.15"/>
</dbReference>
<dbReference type="GeneID" id="58193"/>
<dbReference type="KEGG" id="mmu:58193"/>
<dbReference type="UCSC" id="uc008rbu.2">
    <property type="organism name" value="mouse"/>
</dbReference>
<dbReference type="AGR" id="MGI:1889574"/>
<dbReference type="CTD" id="2135"/>
<dbReference type="MGI" id="MGI:1889574">
    <property type="gene designation" value="Extl2"/>
</dbReference>
<dbReference type="VEuPathDB" id="HostDB:ENSMUSG00000027963"/>
<dbReference type="eggNOG" id="KOG1022">
    <property type="taxonomic scope" value="Eukaryota"/>
</dbReference>
<dbReference type="GeneTree" id="ENSGT00940000158820"/>
<dbReference type="InParanoid" id="Q9ES89"/>
<dbReference type="OMA" id="HYQGVPH"/>
<dbReference type="OrthoDB" id="2014201at2759"/>
<dbReference type="PhylomeDB" id="Q9ES89"/>
<dbReference type="TreeFam" id="TF314231"/>
<dbReference type="BRENDA" id="2.4.1.223">
    <property type="organism ID" value="3474"/>
</dbReference>
<dbReference type="BioGRID-ORCS" id="58193">
    <property type="hits" value="0 hits in 76 CRISPR screens"/>
</dbReference>
<dbReference type="ChiTaRS" id="Extl2">
    <property type="organism name" value="mouse"/>
</dbReference>
<dbReference type="EvolutionaryTrace" id="Q9ES89"/>
<dbReference type="PRO" id="PR:Q9ES89"/>
<dbReference type="Proteomes" id="UP000000589">
    <property type="component" value="Chromosome 3"/>
</dbReference>
<dbReference type="RNAct" id="Q9ES89">
    <property type="molecule type" value="protein"/>
</dbReference>
<dbReference type="Bgee" id="ENSMUSG00000027963">
    <property type="expression patterns" value="Expressed in facial nucleus and 243 other cell types or tissues"/>
</dbReference>
<dbReference type="ExpressionAtlas" id="Q9ES89">
    <property type="expression patterns" value="baseline and differential"/>
</dbReference>
<dbReference type="GO" id="GO:0005829">
    <property type="term" value="C:cytosol"/>
    <property type="evidence" value="ECO:0007669"/>
    <property type="project" value="Ensembl"/>
</dbReference>
<dbReference type="GO" id="GO:0005789">
    <property type="term" value="C:endoplasmic reticulum membrane"/>
    <property type="evidence" value="ECO:0007669"/>
    <property type="project" value="UniProtKB-SubCell"/>
</dbReference>
<dbReference type="GO" id="GO:0005654">
    <property type="term" value="C:nucleoplasm"/>
    <property type="evidence" value="ECO:0007669"/>
    <property type="project" value="Ensembl"/>
</dbReference>
<dbReference type="GO" id="GO:0035248">
    <property type="term" value="F:alpha-1,4-N-acetylgalactosaminyltransferase activity"/>
    <property type="evidence" value="ECO:0000315"/>
    <property type="project" value="CAFA"/>
</dbReference>
<dbReference type="GO" id="GO:0001888">
    <property type="term" value="F:glucuronyl-galactosyl-proteoglycan 4-alpha-N-acetylglucosaminyltransferase activity"/>
    <property type="evidence" value="ECO:0007669"/>
    <property type="project" value="UniProtKB-EC"/>
</dbReference>
<dbReference type="GO" id="GO:0047237">
    <property type="term" value="F:glucuronylgalactosylproteoglycan 4-beta-N-acetylgalactosaminyltransferase activity"/>
    <property type="evidence" value="ECO:0000315"/>
    <property type="project" value="CAFA"/>
</dbReference>
<dbReference type="GO" id="GO:0005539">
    <property type="term" value="F:glycosaminoglycan binding"/>
    <property type="evidence" value="ECO:0000315"/>
    <property type="project" value="CAFA"/>
</dbReference>
<dbReference type="GO" id="GO:0030145">
    <property type="term" value="F:manganese ion binding"/>
    <property type="evidence" value="ECO:0000315"/>
    <property type="project" value="CAFA"/>
</dbReference>
<dbReference type="GO" id="GO:0006044">
    <property type="term" value="P:N-acetylglucosamine metabolic process"/>
    <property type="evidence" value="ECO:0000315"/>
    <property type="project" value="CAFA"/>
</dbReference>
<dbReference type="GO" id="GO:0019276">
    <property type="term" value="P:UDP-N-acetylgalactosamine metabolic process"/>
    <property type="evidence" value="ECO:0000315"/>
    <property type="project" value="CAFA"/>
</dbReference>
<dbReference type="DisProt" id="DP00397"/>
<dbReference type="FunFam" id="3.90.550.10:FF:000058">
    <property type="entry name" value="Exostosin-like glycosyltransferase 2"/>
    <property type="match status" value="1"/>
</dbReference>
<dbReference type="Gene3D" id="3.90.550.10">
    <property type="entry name" value="Spore Coat Polysaccharide Biosynthesis Protein SpsA, Chain A"/>
    <property type="match status" value="1"/>
</dbReference>
<dbReference type="InterPro" id="IPR052427">
    <property type="entry name" value="Glycosyltrans_GT2/GT47"/>
</dbReference>
<dbReference type="InterPro" id="IPR015338">
    <property type="entry name" value="GT64_dom"/>
</dbReference>
<dbReference type="InterPro" id="IPR029044">
    <property type="entry name" value="Nucleotide-diphossugar_trans"/>
</dbReference>
<dbReference type="PANTHER" id="PTHR47844:SF1">
    <property type="entry name" value="EXOSTOSIN-LIKE 2"/>
    <property type="match status" value="1"/>
</dbReference>
<dbReference type="PANTHER" id="PTHR47844">
    <property type="entry name" value="SYNTHASE CPS1, PUTATIVE (AFU_ORTHOLOGUE AFUA_7G02500)-RELATED"/>
    <property type="match status" value="1"/>
</dbReference>
<dbReference type="Pfam" id="PF09258">
    <property type="entry name" value="Glyco_transf_64"/>
    <property type="match status" value="1"/>
</dbReference>
<dbReference type="SUPFAM" id="SSF53448">
    <property type="entry name" value="Nucleotide-diphospho-sugar transferases"/>
    <property type="match status" value="1"/>
</dbReference>